<proteinExistence type="inferred from homology"/>
<name>FLGH_ALISL</name>
<keyword id="KW-0975">Bacterial flagellum</keyword>
<keyword id="KW-0998">Cell outer membrane</keyword>
<keyword id="KW-0449">Lipoprotein</keyword>
<keyword id="KW-0472">Membrane</keyword>
<keyword id="KW-0564">Palmitate</keyword>
<keyword id="KW-0732">Signal</keyword>
<feature type="signal peptide" evidence="1">
    <location>
        <begin position="1"/>
        <end position="15"/>
    </location>
</feature>
<feature type="chain" id="PRO_1000123937" description="Flagellar L-ring protein">
    <location>
        <begin position="16"/>
        <end position="261"/>
    </location>
</feature>
<feature type="region of interest" description="Disordered" evidence="2">
    <location>
        <begin position="121"/>
        <end position="140"/>
    </location>
</feature>
<feature type="compositionally biased region" description="Basic and acidic residues" evidence="2">
    <location>
        <begin position="121"/>
        <end position="133"/>
    </location>
</feature>
<feature type="lipid moiety-binding region" description="N-palmitoyl cysteine" evidence="1">
    <location>
        <position position="16"/>
    </location>
</feature>
<feature type="lipid moiety-binding region" description="S-diacylglycerol cysteine" evidence="1">
    <location>
        <position position="16"/>
    </location>
</feature>
<reference key="1">
    <citation type="journal article" date="2008" name="BMC Genomics">
        <title>The genome sequence of the fish pathogen Aliivibrio salmonicida strain LFI1238 shows extensive evidence of gene decay.</title>
        <authorList>
            <person name="Hjerde E."/>
            <person name="Lorentzen M.S."/>
            <person name="Holden M.T."/>
            <person name="Seeger K."/>
            <person name="Paulsen S."/>
            <person name="Bason N."/>
            <person name="Churcher C."/>
            <person name="Harris D."/>
            <person name="Norbertczak H."/>
            <person name="Quail M.A."/>
            <person name="Sanders S."/>
            <person name="Thurston S."/>
            <person name="Parkhill J."/>
            <person name="Willassen N.P."/>
            <person name="Thomson N.R."/>
        </authorList>
    </citation>
    <scope>NUCLEOTIDE SEQUENCE [LARGE SCALE GENOMIC DNA]</scope>
    <source>
        <strain>LFI1238</strain>
    </source>
</reference>
<gene>
    <name evidence="1" type="primary">flgH</name>
    <name type="ordered locus">VSAL_I2332</name>
</gene>
<sequence>MKRLLCLLLLTTLTGCGSFLIQNPNLQENEVTSATTNVDAVEGDKEEDTGIIDTLRGRSEPISGDPAWAPIHPKEKPEHYAAATGSLFNVDHAQDMYDDTKPRGLGDIVTVMLAENTKAAKSADAELSKKNDSSMDPLQVGGQELQVGGQYNFSYELSNDNKFTGNTSANQSNSLSGSITVEVIEVLSNGNLLIRGEKWLTLNTGDEYIRLSGTIRPDDIAFDNTIASTRISNARIQYSGTGDQQDMQEPGFLARFFNVAL</sequence>
<evidence type="ECO:0000255" key="1">
    <source>
        <dbReference type="HAMAP-Rule" id="MF_00415"/>
    </source>
</evidence>
<evidence type="ECO:0000256" key="2">
    <source>
        <dbReference type="SAM" id="MobiDB-lite"/>
    </source>
</evidence>
<protein>
    <recommendedName>
        <fullName evidence="1">Flagellar L-ring protein</fullName>
    </recommendedName>
    <alternativeName>
        <fullName evidence="1">Basal body L-ring protein</fullName>
    </alternativeName>
</protein>
<organism>
    <name type="scientific">Aliivibrio salmonicida (strain LFI1238)</name>
    <name type="common">Vibrio salmonicida (strain LFI1238)</name>
    <dbReference type="NCBI Taxonomy" id="316275"/>
    <lineage>
        <taxon>Bacteria</taxon>
        <taxon>Pseudomonadati</taxon>
        <taxon>Pseudomonadota</taxon>
        <taxon>Gammaproteobacteria</taxon>
        <taxon>Vibrionales</taxon>
        <taxon>Vibrionaceae</taxon>
        <taxon>Aliivibrio</taxon>
    </lineage>
</organism>
<dbReference type="EMBL" id="FM178379">
    <property type="protein sequence ID" value="CAQ80016.1"/>
    <property type="molecule type" value="Genomic_DNA"/>
</dbReference>
<dbReference type="RefSeq" id="WP_012550828.1">
    <property type="nucleotide sequence ID" value="NC_011312.1"/>
</dbReference>
<dbReference type="SMR" id="B6EJG2"/>
<dbReference type="KEGG" id="vsa:VSAL_I2332"/>
<dbReference type="eggNOG" id="COG2063">
    <property type="taxonomic scope" value="Bacteria"/>
</dbReference>
<dbReference type="HOGENOM" id="CLU_069313_0_2_6"/>
<dbReference type="Proteomes" id="UP000001730">
    <property type="component" value="Chromosome 1"/>
</dbReference>
<dbReference type="GO" id="GO:0009427">
    <property type="term" value="C:bacterial-type flagellum basal body, distal rod, L ring"/>
    <property type="evidence" value="ECO:0007669"/>
    <property type="project" value="InterPro"/>
</dbReference>
<dbReference type="GO" id="GO:0009279">
    <property type="term" value="C:cell outer membrane"/>
    <property type="evidence" value="ECO:0007669"/>
    <property type="project" value="UniProtKB-SubCell"/>
</dbReference>
<dbReference type="GO" id="GO:0003774">
    <property type="term" value="F:cytoskeletal motor activity"/>
    <property type="evidence" value="ECO:0007669"/>
    <property type="project" value="InterPro"/>
</dbReference>
<dbReference type="GO" id="GO:0071973">
    <property type="term" value="P:bacterial-type flagellum-dependent cell motility"/>
    <property type="evidence" value="ECO:0007669"/>
    <property type="project" value="InterPro"/>
</dbReference>
<dbReference type="HAMAP" id="MF_00415">
    <property type="entry name" value="FlgH"/>
    <property type="match status" value="1"/>
</dbReference>
<dbReference type="InterPro" id="IPR000527">
    <property type="entry name" value="Flag_Lring"/>
</dbReference>
<dbReference type="NCBIfam" id="NF001302">
    <property type="entry name" value="PRK00249.1-2"/>
    <property type="match status" value="1"/>
</dbReference>
<dbReference type="PANTHER" id="PTHR34933">
    <property type="entry name" value="FLAGELLAR L-RING PROTEIN"/>
    <property type="match status" value="1"/>
</dbReference>
<dbReference type="PANTHER" id="PTHR34933:SF1">
    <property type="entry name" value="FLAGELLAR L-RING PROTEIN"/>
    <property type="match status" value="1"/>
</dbReference>
<dbReference type="Pfam" id="PF02107">
    <property type="entry name" value="FlgH"/>
    <property type="match status" value="1"/>
</dbReference>
<dbReference type="PRINTS" id="PR01008">
    <property type="entry name" value="FLGLRINGFLGH"/>
</dbReference>
<dbReference type="PROSITE" id="PS51257">
    <property type="entry name" value="PROKAR_LIPOPROTEIN"/>
    <property type="match status" value="1"/>
</dbReference>
<comment type="function">
    <text evidence="1">Assembles around the rod to form the L-ring and probably protects the motor/basal body from shearing forces during rotation.</text>
</comment>
<comment type="subunit">
    <text evidence="1">The basal body constitutes a major portion of the flagellar organelle and consists of four rings (L,P,S, and M) mounted on a central rod.</text>
</comment>
<comment type="subcellular location">
    <subcellularLocation>
        <location evidence="1">Cell outer membrane</location>
        <topology evidence="1">Lipid-anchor</topology>
    </subcellularLocation>
    <subcellularLocation>
        <location evidence="1">Bacterial flagellum basal body</location>
    </subcellularLocation>
</comment>
<comment type="similarity">
    <text evidence="1">Belongs to the FlgH family.</text>
</comment>
<accession>B6EJG2</accession>